<dbReference type="EMBL" id="CP000001">
    <property type="protein sequence ID" value="AAU16070.1"/>
    <property type="molecule type" value="Genomic_DNA"/>
</dbReference>
<dbReference type="RefSeq" id="WP_001013376.1">
    <property type="nucleotide sequence ID" value="NC_006274.1"/>
</dbReference>
<dbReference type="SMR" id="Q633Z0"/>
<dbReference type="KEGG" id="bcz:BCE33L4198"/>
<dbReference type="PATRIC" id="fig|288681.22.peg.1185"/>
<dbReference type="Proteomes" id="UP000002612">
    <property type="component" value="Chromosome"/>
</dbReference>
<dbReference type="GO" id="GO:0046872">
    <property type="term" value="F:metal ion binding"/>
    <property type="evidence" value="ECO:0007669"/>
    <property type="project" value="UniProtKB-KW"/>
</dbReference>
<dbReference type="GO" id="GO:0008237">
    <property type="term" value="F:metallopeptidase activity"/>
    <property type="evidence" value="ECO:0007669"/>
    <property type="project" value="UniProtKB-KW"/>
</dbReference>
<dbReference type="GO" id="GO:0006508">
    <property type="term" value="P:proteolysis"/>
    <property type="evidence" value="ECO:0007669"/>
    <property type="project" value="UniProtKB-KW"/>
</dbReference>
<dbReference type="CDD" id="cd08071">
    <property type="entry name" value="MPN_DUF2466"/>
    <property type="match status" value="1"/>
</dbReference>
<dbReference type="Gene3D" id="3.40.140.10">
    <property type="entry name" value="Cytidine Deaminase, domain 2"/>
    <property type="match status" value="1"/>
</dbReference>
<dbReference type="InterPro" id="IPR037518">
    <property type="entry name" value="MPN"/>
</dbReference>
<dbReference type="InterPro" id="IPR025657">
    <property type="entry name" value="RadC_JAB"/>
</dbReference>
<dbReference type="InterPro" id="IPR010994">
    <property type="entry name" value="RuvA_2-like"/>
</dbReference>
<dbReference type="InterPro" id="IPR001405">
    <property type="entry name" value="UPF0758"/>
</dbReference>
<dbReference type="InterPro" id="IPR020891">
    <property type="entry name" value="UPF0758_CS"/>
</dbReference>
<dbReference type="InterPro" id="IPR046778">
    <property type="entry name" value="UPF0758_N"/>
</dbReference>
<dbReference type="NCBIfam" id="NF000642">
    <property type="entry name" value="PRK00024.1"/>
    <property type="match status" value="1"/>
</dbReference>
<dbReference type="NCBIfam" id="TIGR00608">
    <property type="entry name" value="radc"/>
    <property type="match status" value="1"/>
</dbReference>
<dbReference type="PANTHER" id="PTHR30471">
    <property type="entry name" value="DNA REPAIR PROTEIN RADC"/>
    <property type="match status" value="1"/>
</dbReference>
<dbReference type="PANTHER" id="PTHR30471:SF3">
    <property type="entry name" value="UPF0758 PROTEIN YEES-RELATED"/>
    <property type="match status" value="1"/>
</dbReference>
<dbReference type="Pfam" id="PF04002">
    <property type="entry name" value="RadC"/>
    <property type="match status" value="1"/>
</dbReference>
<dbReference type="Pfam" id="PF20582">
    <property type="entry name" value="UPF0758_N"/>
    <property type="match status" value="1"/>
</dbReference>
<dbReference type="SUPFAM" id="SSF47781">
    <property type="entry name" value="RuvA domain 2-like"/>
    <property type="match status" value="1"/>
</dbReference>
<dbReference type="PROSITE" id="PS50249">
    <property type="entry name" value="MPN"/>
    <property type="match status" value="1"/>
</dbReference>
<dbReference type="PROSITE" id="PS01302">
    <property type="entry name" value="UPF0758"/>
    <property type="match status" value="1"/>
</dbReference>
<sequence length="225" mass="25700">MNGIRDVVKEEQPRERLLLEGAGSLSNRELLAVLLRTGSKEESVLKLSDKILHHFDGLRMLKDATLEELVSIHGVGVAKASQLIAAFELGRRMVRLEYQNRYSIRNPEDCARYMMEEMRFLQQEHFVCLYLNTKNQVIHRQTIFIGSLNSSIVHPREVFKEAFRRAAASIICLHNHPSGDPAPSREDIEVTKRLVECGRIIGIEVLDHIIIGDHKFVSLKEKGHI</sequence>
<protein>
    <recommendedName>
        <fullName>UPF0758 protein BCE33L4198</fullName>
    </recommendedName>
</protein>
<evidence type="ECO:0000255" key="1">
    <source>
        <dbReference type="PROSITE-ProRule" id="PRU01182"/>
    </source>
</evidence>
<evidence type="ECO:0000305" key="2"/>
<organism>
    <name type="scientific">Bacillus cereus (strain ZK / E33L)</name>
    <dbReference type="NCBI Taxonomy" id="288681"/>
    <lineage>
        <taxon>Bacteria</taxon>
        <taxon>Bacillati</taxon>
        <taxon>Bacillota</taxon>
        <taxon>Bacilli</taxon>
        <taxon>Bacillales</taxon>
        <taxon>Bacillaceae</taxon>
        <taxon>Bacillus</taxon>
        <taxon>Bacillus cereus group</taxon>
    </lineage>
</organism>
<reference key="1">
    <citation type="journal article" date="2006" name="J. Bacteriol.">
        <title>Pathogenomic sequence analysis of Bacillus cereus and Bacillus thuringiensis isolates closely related to Bacillus anthracis.</title>
        <authorList>
            <person name="Han C.S."/>
            <person name="Xie G."/>
            <person name="Challacombe J.F."/>
            <person name="Altherr M.R."/>
            <person name="Bhotika S.S."/>
            <person name="Bruce D."/>
            <person name="Campbell C.S."/>
            <person name="Campbell M.L."/>
            <person name="Chen J."/>
            <person name="Chertkov O."/>
            <person name="Cleland C."/>
            <person name="Dimitrijevic M."/>
            <person name="Doggett N.A."/>
            <person name="Fawcett J.J."/>
            <person name="Glavina T."/>
            <person name="Goodwin L.A."/>
            <person name="Hill K.K."/>
            <person name="Hitchcock P."/>
            <person name="Jackson P.J."/>
            <person name="Keim P."/>
            <person name="Kewalramani A.R."/>
            <person name="Longmire J."/>
            <person name="Lucas S."/>
            <person name="Malfatti S."/>
            <person name="McMurry K."/>
            <person name="Meincke L.J."/>
            <person name="Misra M."/>
            <person name="Moseman B.L."/>
            <person name="Mundt M."/>
            <person name="Munk A.C."/>
            <person name="Okinaka R.T."/>
            <person name="Parson-Quintana B."/>
            <person name="Reilly L.P."/>
            <person name="Richardson P."/>
            <person name="Robinson D.L."/>
            <person name="Rubin E."/>
            <person name="Saunders E."/>
            <person name="Tapia R."/>
            <person name="Tesmer J.G."/>
            <person name="Thayer N."/>
            <person name="Thompson L.S."/>
            <person name="Tice H."/>
            <person name="Ticknor L.O."/>
            <person name="Wills P.L."/>
            <person name="Brettin T.S."/>
            <person name="Gilna P."/>
        </authorList>
    </citation>
    <scope>NUCLEOTIDE SEQUENCE [LARGE SCALE GENOMIC DNA]</scope>
    <source>
        <strain>ZK / E33L</strain>
    </source>
</reference>
<keyword id="KW-0378">Hydrolase</keyword>
<keyword id="KW-0479">Metal-binding</keyword>
<keyword id="KW-0482">Metalloprotease</keyword>
<keyword id="KW-0645">Protease</keyword>
<keyword id="KW-0862">Zinc</keyword>
<accession>Q633Z0</accession>
<gene>
    <name type="ordered locus">BCE33L4198</name>
</gene>
<proteinExistence type="inferred from homology"/>
<feature type="chain" id="PRO_1000001646" description="UPF0758 protein BCE33L4198">
    <location>
        <begin position="1"/>
        <end position="225"/>
    </location>
</feature>
<feature type="domain" description="MPN" evidence="1">
    <location>
        <begin position="103"/>
        <end position="225"/>
    </location>
</feature>
<feature type="short sequence motif" description="JAMM motif" evidence="1">
    <location>
        <begin position="174"/>
        <end position="187"/>
    </location>
</feature>
<feature type="binding site" evidence="1">
    <location>
        <position position="174"/>
    </location>
    <ligand>
        <name>Zn(2+)</name>
        <dbReference type="ChEBI" id="CHEBI:29105"/>
        <note>catalytic</note>
    </ligand>
</feature>
<feature type="binding site" evidence="1">
    <location>
        <position position="176"/>
    </location>
    <ligand>
        <name>Zn(2+)</name>
        <dbReference type="ChEBI" id="CHEBI:29105"/>
        <note>catalytic</note>
    </ligand>
</feature>
<feature type="binding site" evidence="1">
    <location>
        <position position="187"/>
    </location>
    <ligand>
        <name>Zn(2+)</name>
        <dbReference type="ChEBI" id="CHEBI:29105"/>
        <note>catalytic</note>
    </ligand>
</feature>
<comment type="similarity">
    <text evidence="2">Belongs to the UPF0758 family.</text>
</comment>
<name>Y4198_BACCZ</name>